<dbReference type="CCDS" id="CCDS37944.1"/>
<dbReference type="RefSeq" id="NP_001391499.1">
    <property type="nucleotide sequence ID" value="NM_001404570.1"/>
</dbReference>
<dbReference type="RefSeq" id="NP_001391501.1">
    <property type="nucleotide sequence ID" value="NM_001404572.1"/>
</dbReference>
<dbReference type="RefSeq" id="NP_001391502.1">
    <property type="nucleotide sequence ID" value="NM_001404573.1"/>
</dbReference>
<dbReference type="RefSeq" id="NP_001391504.1">
    <property type="nucleotide sequence ID" value="NM_001404575.1"/>
</dbReference>
<dbReference type="RefSeq" id="NP_001391505.1">
    <property type="nucleotide sequence ID" value="NM_001404576.1"/>
</dbReference>
<dbReference type="RefSeq" id="NP_852069.4">
    <property type="nucleotide sequence ID" value="NM_181404.6"/>
</dbReference>
<dbReference type="RefSeq" id="XP_006526648.1">
    <property type="nucleotide sequence ID" value="XM_006526585.3"/>
</dbReference>
<dbReference type="RefSeq" id="XP_011245415.1">
    <property type="nucleotide sequence ID" value="XM_011247113.2"/>
</dbReference>
<dbReference type="RefSeq" id="XP_036017280.1">
    <property type="nucleotide sequence ID" value="XM_036161387.1"/>
</dbReference>
<dbReference type="PDB" id="5YAY">
    <property type="method" value="X-ray"/>
    <property type="resolution" value="1.55 A"/>
    <property type="chains" value="A=1088-1338"/>
</dbReference>
<dbReference type="PDB" id="5YAZ">
    <property type="method" value="X-ray"/>
    <property type="resolution" value="1.90 A"/>
    <property type="chains" value="A=1088-1338"/>
</dbReference>
<dbReference type="PDB" id="7DDX">
    <property type="method" value="X-ray"/>
    <property type="resolution" value="2.50 A"/>
    <property type="chains" value="A=1088-1338"/>
</dbReference>
<dbReference type="PDBsum" id="5YAY"/>
<dbReference type="PDBsum" id="5YAZ"/>
<dbReference type="PDBsum" id="7DDX"/>
<dbReference type="SMR" id="E9Q238"/>
<dbReference type="FunCoup" id="E9Q238">
    <property type="interactions" value="1934"/>
</dbReference>
<dbReference type="IntAct" id="E9Q238">
    <property type="interactions" value="1"/>
</dbReference>
<dbReference type="STRING" id="10090.ENSMUSP00000042177"/>
<dbReference type="iPTMnet" id="E9Q238"/>
<dbReference type="PhosphoSitePlus" id="E9Q238"/>
<dbReference type="jPOST" id="E9Q238"/>
<dbReference type="PaxDb" id="10090-ENSMUSP00000042177"/>
<dbReference type="PeptideAtlas" id="E9Q238"/>
<dbReference type="ProteomicsDB" id="351203"/>
<dbReference type="Antibodypedia" id="1018">
    <property type="antibodies" value="100 antibodies from 25 providers"/>
</dbReference>
<dbReference type="DNASU" id="107351"/>
<dbReference type="Ensembl" id="ENSMUST00000049400.15">
    <property type="protein sequence ID" value="ENSMUSP00000042177.9"/>
    <property type="gene ID" value="ENSMUSG00000032702.17"/>
</dbReference>
<dbReference type="GeneID" id="107351"/>
<dbReference type="KEGG" id="mmu:107351"/>
<dbReference type="UCSC" id="uc008hbf.1">
    <property type="organism name" value="mouse"/>
</dbReference>
<dbReference type="AGR" id="MGI:2147707"/>
<dbReference type="CTD" id="23189"/>
<dbReference type="MGI" id="MGI:2147707">
    <property type="gene designation" value="Kank1"/>
</dbReference>
<dbReference type="VEuPathDB" id="HostDB:ENSMUSG00000032702"/>
<dbReference type="eggNOG" id="KOG0514">
    <property type="taxonomic scope" value="Eukaryota"/>
</dbReference>
<dbReference type="GeneTree" id="ENSGT00940000154886"/>
<dbReference type="HOGENOM" id="CLU_004269_1_1_1"/>
<dbReference type="InParanoid" id="E9Q238"/>
<dbReference type="OMA" id="TFNPYLC"/>
<dbReference type="OrthoDB" id="5406014at2759"/>
<dbReference type="PhylomeDB" id="E9Q238"/>
<dbReference type="TreeFam" id="TF324499"/>
<dbReference type="BioGRID-ORCS" id="107351">
    <property type="hits" value="2 hits in 77 CRISPR screens"/>
</dbReference>
<dbReference type="ChiTaRS" id="Kank1">
    <property type="organism name" value="mouse"/>
</dbReference>
<dbReference type="Proteomes" id="UP000000589">
    <property type="component" value="Chromosome 19"/>
</dbReference>
<dbReference type="RNAct" id="E9Q238">
    <property type="molecule type" value="protein"/>
</dbReference>
<dbReference type="Bgee" id="ENSMUSG00000032702">
    <property type="expression patterns" value="Expressed in humerus cartilage element and 286 other cell types or tissues"/>
</dbReference>
<dbReference type="ExpressionAtlas" id="E9Q238">
    <property type="expression patterns" value="baseline and differential"/>
</dbReference>
<dbReference type="GO" id="GO:0005938">
    <property type="term" value="C:cell cortex"/>
    <property type="evidence" value="ECO:0000250"/>
    <property type="project" value="UniProtKB"/>
</dbReference>
<dbReference type="GO" id="GO:0005634">
    <property type="term" value="C:nucleus"/>
    <property type="evidence" value="ECO:0007669"/>
    <property type="project" value="UniProtKB-SubCell"/>
</dbReference>
<dbReference type="GO" id="GO:0032587">
    <property type="term" value="C:ruffle membrane"/>
    <property type="evidence" value="ECO:0007669"/>
    <property type="project" value="UniProtKB-SubCell"/>
</dbReference>
<dbReference type="GO" id="GO:0008013">
    <property type="term" value="F:beta-catenin binding"/>
    <property type="evidence" value="ECO:0007669"/>
    <property type="project" value="Ensembl"/>
</dbReference>
<dbReference type="GO" id="GO:0030674">
    <property type="term" value="F:protein-macromolecule adaptor activity"/>
    <property type="evidence" value="ECO:0000250"/>
    <property type="project" value="UniProtKB"/>
</dbReference>
<dbReference type="GO" id="GO:0030036">
    <property type="term" value="P:actin cytoskeleton organization"/>
    <property type="evidence" value="ECO:0007669"/>
    <property type="project" value="Ensembl"/>
</dbReference>
<dbReference type="GO" id="GO:0008283">
    <property type="term" value="P:cell population proliferation"/>
    <property type="evidence" value="ECO:0007669"/>
    <property type="project" value="Ensembl"/>
</dbReference>
<dbReference type="GO" id="GO:0043622">
    <property type="term" value="P:cortical microtubule organization"/>
    <property type="evidence" value="ECO:0000250"/>
    <property type="project" value="UniProtKB"/>
</dbReference>
<dbReference type="GO" id="GO:0030837">
    <property type="term" value="P:negative regulation of actin filament polymerization"/>
    <property type="evidence" value="ECO:0000266"/>
    <property type="project" value="MGI"/>
</dbReference>
<dbReference type="GO" id="GO:0030336">
    <property type="term" value="P:negative regulation of cell migration"/>
    <property type="evidence" value="ECO:0007669"/>
    <property type="project" value="Ensembl"/>
</dbReference>
<dbReference type="GO" id="GO:0046627">
    <property type="term" value="P:negative regulation of insulin receptor signaling pathway"/>
    <property type="evidence" value="ECO:0007669"/>
    <property type="project" value="Ensembl"/>
</dbReference>
<dbReference type="GO" id="GO:2000393">
    <property type="term" value="P:negative regulation of lamellipodium morphogenesis"/>
    <property type="evidence" value="ECO:0007669"/>
    <property type="project" value="Ensembl"/>
</dbReference>
<dbReference type="GO" id="GO:0010977">
    <property type="term" value="P:negative regulation of neuron projection development"/>
    <property type="evidence" value="ECO:0007669"/>
    <property type="project" value="Ensembl"/>
</dbReference>
<dbReference type="GO" id="GO:0035024">
    <property type="term" value="P:negative regulation of Rho protein signal transduction"/>
    <property type="evidence" value="ECO:0007669"/>
    <property type="project" value="Ensembl"/>
</dbReference>
<dbReference type="GO" id="GO:1900028">
    <property type="term" value="P:negative regulation of ruffle assembly"/>
    <property type="evidence" value="ECO:0007669"/>
    <property type="project" value="Ensembl"/>
</dbReference>
<dbReference type="GO" id="GO:1900025">
    <property type="term" value="P:negative regulation of substrate adhesion-dependent cell spreading"/>
    <property type="evidence" value="ECO:0007669"/>
    <property type="project" value="Ensembl"/>
</dbReference>
<dbReference type="GO" id="GO:0090521">
    <property type="term" value="P:podocyte cell migration"/>
    <property type="evidence" value="ECO:0007669"/>
    <property type="project" value="Ensembl"/>
</dbReference>
<dbReference type="GO" id="GO:0090263">
    <property type="term" value="P:positive regulation of canonical Wnt signaling pathway"/>
    <property type="evidence" value="ECO:0007669"/>
    <property type="project" value="Ensembl"/>
</dbReference>
<dbReference type="GO" id="GO:0090303">
    <property type="term" value="P:positive regulation of wound healing"/>
    <property type="evidence" value="ECO:0007669"/>
    <property type="project" value="Ensembl"/>
</dbReference>
<dbReference type="GO" id="GO:2000114">
    <property type="term" value="P:regulation of establishment of cell polarity"/>
    <property type="evidence" value="ECO:0007669"/>
    <property type="project" value="Ensembl"/>
</dbReference>
<dbReference type="FunFam" id="1.25.40.20:FF:000017">
    <property type="entry name" value="KN motif and ankyrin repeat domain-containing protein 1"/>
    <property type="match status" value="1"/>
</dbReference>
<dbReference type="Gene3D" id="1.25.40.20">
    <property type="entry name" value="Ankyrin repeat-containing domain"/>
    <property type="match status" value="1"/>
</dbReference>
<dbReference type="InterPro" id="IPR002110">
    <property type="entry name" value="Ankyrin_rpt"/>
</dbReference>
<dbReference type="InterPro" id="IPR036770">
    <property type="entry name" value="Ankyrin_rpt-contain_sf"/>
</dbReference>
<dbReference type="InterPro" id="IPR047184">
    <property type="entry name" value="KANK1-4"/>
</dbReference>
<dbReference type="InterPro" id="IPR021939">
    <property type="entry name" value="KN_motif"/>
</dbReference>
<dbReference type="PANTHER" id="PTHR24168">
    <property type="entry name" value="KN MOTIF AND ANKYRIN REPEAT DOMAIN-CONTAINING"/>
    <property type="match status" value="1"/>
</dbReference>
<dbReference type="PANTHER" id="PTHR24168:SF19">
    <property type="entry name" value="KN MOTIF AND ANKYRIN REPEAT DOMAIN-CONTAINING PROTEIN 1"/>
    <property type="match status" value="1"/>
</dbReference>
<dbReference type="Pfam" id="PF12796">
    <property type="entry name" value="Ank_2"/>
    <property type="match status" value="2"/>
</dbReference>
<dbReference type="Pfam" id="PF12075">
    <property type="entry name" value="KN_motif"/>
    <property type="match status" value="1"/>
</dbReference>
<dbReference type="SMART" id="SM00248">
    <property type="entry name" value="ANK"/>
    <property type="match status" value="5"/>
</dbReference>
<dbReference type="SUPFAM" id="SSF48403">
    <property type="entry name" value="Ankyrin repeat"/>
    <property type="match status" value="1"/>
</dbReference>
<dbReference type="PROSITE" id="PS50297">
    <property type="entry name" value="ANK_REP_REGION"/>
    <property type="match status" value="3"/>
</dbReference>
<dbReference type="PROSITE" id="PS50088">
    <property type="entry name" value="ANK_REPEAT"/>
    <property type="match status" value="3"/>
</dbReference>
<gene>
    <name evidence="6 7" type="primary">Kank1</name>
</gene>
<reference key="1">
    <citation type="journal article" date="2009" name="PLoS Biol.">
        <title>Lineage-specific biology revealed by a finished genome assembly of the mouse.</title>
        <authorList>
            <person name="Church D.M."/>
            <person name="Goodstadt L."/>
            <person name="Hillier L.W."/>
            <person name="Zody M.C."/>
            <person name="Goldstein S."/>
            <person name="She X."/>
            <person name="Bult C.J."/>
            <person name="Agarwala R."/>
            <person name="Cherry J.L."/>
            <person name="DiCuccio M."/>
            <person name="Hlavina W."/>
            <person name="Kapustin Y."/>
            <person name="Meric P."/>
            <person name="Maglott D."/>
            <person name="Birtle Z."/>
            <person name="Marques A.C."/>
            <person name="Graves T."/>
            <person name="Zhou S."/>
            <person name="Teague B."/>
            <person name="Potamousis K."/>
            <person name="Churas C."/>
            <person name="Place M."/>
            <person name="Herschleb J."/>
            <person name="Runnheim R."/>
            <person name="Forrest D."/>
            <person name="Amos-Landgraf J."/>
            <person name="Schwartz D.C."/>
            <person name="Cheng Z."/>
            <person name="Lindblad-Toh K."/>
            <person name="Eichler E.E."/>
            <person name="Ponting C.P."/>
        </authorList>
    </citation>
    <scope>NUCLEOTIDE SEQUENCE [LARGE SCALE GENOMIC DNA]</scope>
    <source>
        <strain>C57BL/6J</strain>
    </source>
</reference>
<reference key="2">
    <citation type="journal article" date="2010" name="Cell">
        <title>A tissue-specific atlas of mouse protein phosphorylation and expression.</title>
        <authorList>
            <person name="Huttlin E.L."/>
            <person name="Jedrychowski M.P."/>
            <person name="Elias J.E."/>
            <person name="Goswami T."/>
            <person name="Rad R."/>
            <person name="Beausoleil S.A."/>
            <person name="Villen J."/>
            <person name="Haas W."/>
            <person name="Sowa M.E."/>
            <person name="Gygi S.P."/>
        </authorList>
    </citation>
    <scope>IDENTIFICATION BY MASS SPECTROMETRY [LARGE SCALE ANALYSIS]</scope>
</reference>
<reference key="3">
    <citation type="journal article" date="2014" name="Mol. Cell. Proteomics">
        <title>Immunoaffinity enrichment and mass spectrometry analysis of protein methylation.</title>
        <authorList>
            <person name="Guo A."/>
            <person name="Gu H."/>
            <person name="Zhou J."/>
            <person name="Mulhern D."/>
            <person name="Wang Y."/>
            <person name="Lee K.A."/>
            <person name="Yang V."/>
            <person name="Aguiar M."/>
            <person name="Kornhauser J."/>
            <person name="Jia X."/>
            <person name="Ren J."/>
            <person name="Beausoleil S.A."/>
            <person name="Silva J.C."/>
            <person name="Vemulapalli V."/>
            <person name="Bedford M.T."/>
            <person name="Comb M.J."/>
        </authorList>
    </citation>
    <scope>IDENTIFICATION BY MASS SPECTROMETRY [LARGE SCALE ANALYSIS]</scope>
</reference>
<reference key="4">
    <citation type="journal article" date="2017" name="Exp. Cell Res.">
        <title>Depletion of tumor suppressor Kank1 induces centrosomal amplification via hyperactivation of RhoA.</title>
        <authorList>
            <person name="Suzuki J.I."/>
            <person name="Roy B.C."/>
            <person name="Ogaeri T."/>
            <person name="Kakinuma N."/>
            <person name="Kiyama R."/>
        </authorList>
    </citation>
    <scope>FUNCTION</scope>
    <scope>SUBCELLULAR LOCATION</scope>
</reference>
<reference key="5">
    <citation type="journal article" date="2018" name="J. Biol. Chem.">
        <title>Structural insights into ankyrin repeat-mediated recognition of the kinesin motor protein KIF21A by KANK1, a scaffold protein in focal adhesion.</title>
        <authorList>
            <person name="Pan W."/>
            <person name="Sun K."/>
            <person name="Tang K."/>
            <person name="Xiao Q."/>
            <person name="Ma C."/>
            <person name="Yu C."/>
            <person name="Wei Z."/>
        </authorList>
    </citation>
    <scope>X-RAY CRYSTALLOGRAPHY (1.55 ANGSTROMS) OF 1088-1338 IN COMPLEX WITH KIF21A PEPTIDE</scope>
    <scope>INTERACTION WITH KIF21A</scope>
    <scope>MUTAGENESIS OF TYR-1176; SER-1179; ASN-1201; LEU-1248; SER-1276; GLU-1284 AND ASP-1306</scope>
    <scope>SUBCELLULAR LOCATION</scope>
</reference>
<sequence>MAYTTKVNGCAAEKADGVLNGDHNKEKKDPYFVETPYGFQLDLDFVKYVDDIQKGNTIKKLNIQKRRKPSVPCPEVRAIPGHQGVWTSTESLSSSNSDDSKQCPSFLLARSHVTSTPIPRPPAPLETSPTFAVSENRQLLPPPSPQLPRHNLHVTKTLMETRRRLEQERVTMQMAPGDFRRPRLASFGGMGSTSSLPSFVGSANHSSAIHQLQNGYQGNGDYNSYVPAAPTTSSMGSSVRHSPLSSGISTPVTNVSPMHLQHIREQMAIALKRLKELEEQVRTIPVLQVKISVLQEEKRQLASQLKSQRASSQNEACGVRKRSYSAGNASQLELLARARRGGGELYIDYEEEEMESVEQSTQRIQEFRQLTADMQALERKIQDSSCEVASELRENGQCPSRECKSVAVGSDENMNDVVVYHRDLRPCKDTAVGTVTETRNVGISVTEAMLGVITEADKEIELQQQTIEALKEKIYRLEVQLKETTHDREMTKLKQELQAAGSRKKVDKATMAQPLVFSKLVEALVPTRDQMVGSHVDTRESCVGTSVQTSSVGTSCHPDCKNQVVGSELPMNWWVVKERVAMHDQCVGRSVETCDRSVGVEVSVCETGSNTEASGSDLTLLKTNLNLKDVRSIGCGDCSVDVIVCFPKECTSRSMNTEAVGQEEAAVMAVPHTTDQHTSTNLERVDQCTNTEAATLVESCTNTLLSTMDKQTSTQTVEMRTVAIGEGRVRDINPSTKTRSVGVGTVLSGNSEFDRPCAVKTKESGVGQINIQDNYLVGLKMRTIACGPPQLTVGLMGSRRSVGVGNEPVGELPEESPQPRVASGMVTGLDHYIERVQRLLAEQQTLLAENYSELAEAFGEPHSQIGSLNSQLISTLSSINSVMKSASTEELRNSDFQKASLGKTTGNHLEYTCKCGGLRSGGLLNVQPSQPEVEAETAEGKHSRGHEQFPMQGSTLPPVNLTDDQIATGLYVCPNNENTLKSIMKKSDGNKDSNGAKKNLQFIGINGGYETTSSDESSSDGSSSSESDDECDTIGYPPEEEEEEEEKDHDTRGMAEGHHAVNIEGFKSARVEDEVQVPECEPEKEEIRERYELSEKMLSACNLLKYNIKDPKALASKDMRICLNTLQHDWFRVSSQKSAVPAMVGDYIAAFEAVSPDVLRYIINMADGNGNTALHYSVSHSNFQIVKLLLDADVCNVDHQNKAGYTPIMLAALAAVEAEKDMQVVEELFSCGDVNAKASQAGQTALMLAVSHGRIDMVKGLLACGADVNIQDDEGSTALMCASEHGHVEIVKLLLAQPGCNGHLEDNDGSTALSIALEAGHKDIAVLLYAHLNFSKAQSPSTPRLGRKTSPGPTHRGSFD</sequence>
<comment type="function">
    <text evidence="1 4">Adapter protein that links structural and signaling protein complexes positioned to guide microtubule and actin cytoskeleton dynamics during cell morphogenesis (By similarity). At focal adhesions (FAs) rims, organizes cortical microtubule stabilizing complexes (CMSCs) and directly interacts with major FA component TLN1, forming macromolecular assemblies positioned to control microtubule-actin crosstalk at the cell edge (By similarity). Recruits KIF21A in CMSCs at axonal growth cones and regulates axon guidance by suppressing microtubule growth without inducing microtubule disassembly once it reaches the cell cortex (By similarity). Interacts with ARFGEF1 and participates in establishing microtubule-organizing center (MTOC) orientation and directed cell movement in wound healing (By similarity). Regulates actin stress fiber formation and cell migration by inhibiting RHOA activation in response to growth factors; this function involves phosphorylation through PI3K/Akt signaling and may depend on the competitive interaction with 14-3-3 adapter proteins to sequester them from active complexes (By similarity). Inhibits the formation of lamellipodia but not of filopodia; this function may depend on the competitive interaction with BAIAP2 to block its association with activated RAC1. Inhibits fibronectin-mediated cell spreading; this function is partially mediated by BAIAP2 (By similarity). In the nucleus, is involved in beta-catenin-dependent activation of transcription (By similarity). During cell division, may regulate DAAM1-dependent RHOA activation that signals centrosome maturation and chromosomal segregation. May also be involved in contractile ring formation during cytokinesis (PubMed:28284839). Potential tumor suppressor for renal cell carcinoma (By similarity).</text>
</comment>
<comment type="subunit">
    <text evidence="1 5">Part of a cortical microtubule stabilization complex (CMSC) composed of KANK1, PPFIA1, PPFIBP1, ERC1/ELKS, PHLDB2/LL5beta, CLASPs, KIF21A and possibly additional interactors; within CMSCs KANK1 and PHLDB2/LL5beta appear to be the core components for targeting of microtubule-binding proteins KIF21A and CLASPs, whereas PPFIA1, PPFIBP1 and ERC1/ELKS serve as scaffolds for protein clustering. Interacts (via KN motif) with TLN1 (via R7 domain); this mediates CMSC clustering around focal adhesions. Interacts (via CC1 domain, residues 244-339) with PPFIBP1 (By similarity). Interacts (via ANK repeats 1-5) with KIF21A (via residues 1142-1169) (By similarity) (PubMed:29217769). Interacts with YWHAQ; the interaction requires KANK1 phosphorylation at Ser-325 and is enhanced by growth factor stimulation. Interacts with YWHAB, YWHAG, YWHAE, YWHAH, YWHAZ and SFN; the interaction requires KANK1 phosphorylation at Ser-325 (By similarity). Interacts with ARFGEF1; however, colocalization cannot be experimentally confirmed. Interacts with BAIAP2. Interacts with CTNNB1. Interacts (via coiled coil domain) with DAAM1 (via coiled coil domain) (By similarity).</text>
</comment>
<comment type="subcellular location">
    <subcellularLocation>
        <location evidence="5">Cytoplasm</location>
        <location evidence="5">Cell cortex</location>
    </subcellularLocation>
    <subcellularLocation>
        <location evidence="1">Cell projection</location>
        <location evidence="1">Ruffle membrane</location>
        <topology evidence="1">Peripheral membrane protein</topology>
    </subcellularLocation>
    <subcellularLocation>
        <location evidence="5">Cytoplasm</location>
    </subcellularLocation>
    <subcellularLocation>
        <location evidence="1">Nucleus</location>
    </subcellularLocation>
    <text evidence="1 4">Shuttles between the cytoplasm and nucleus. Colocalizes with CMSC components at focal adhesion rims. Colocalizes with KIF21A in membrane ruffles (By similarity). Colocalizes with RHOA at the contractile ring. Colocalizes with RHOA and DAAM1 around centrosomes (PubMed:28284839).</text>
</comment>
<protein>
    <recommendedName>
        <fullName>KN motif and ankyrin repeat domains 1</fullName>
    </recommendedName>
    <alternativeName>
        <fullName>Ankyrin repeat domain-containing protein 15</fullName>
    </alternativeName>
    <alternativeName>
        <fullName>Kidney ankyrin repeat-containing protein</fullName>
    </alternativeName>
</protein>
<name>KANK1_MOUSE</name>
<keyword id="KW-0002">3D-structure</keyword>
<keyword id="KW-0040">ANK repeat</keyword>
<keyword id="KW-1003">Cell membrane</keyword>
<keyword id="KW-0966">Cell projection</keyword>
<keyword id="KW-0175">Coiled coil</keyword>
<keyword id="KW-0963">Cytoplasm</keyword>
<keyword id="KW-0472">Membrane</keyword>
<keyword id="KW-0539">Nucleus</keyword>
<keyword id="KW-0597">Phosphoprotein</keyword>
<keyword id="KW-1185">Reference proteome</keyword>
<keyword id="KW-0677">Repeat</keyword>
<keyword id="KW-0804">Transcription</keyword>
<keyword id="KW-0805">Transcription regulation</keyword>
<keyword id="KW-0043">Tumor suppressor</keyword>
<organism>
    <name type="scientific">Mus musculus</name>
    <name type="common">Mouse</name>
    <dbReference type="NCBI Taxonomy" id="10090"/>
    <lineage>
        <taxon>Eukaryota</taxon>
        <taxon>Metazoa</taxon>
        <taxon>Chordata</taxon>
        <taxon>Craniata</taxon>
        <taxon>Vertebrata</taxon>
        <taxon>Euteleostomi</taxon>
        <taxon>Mammalia</taxon>
        <taxon>Eutheria</taxon>
        <taxon>Euarchontoglires</taxon>
        <taxon>Glires</taxon>
        <taxon>Rodentia</taxon>
        <taxon>Myomorpha</taxon>
        <taxon>Muroidea</taxon>
        <taxon>Muridae</taxon>
        <taxon>Murinae</taxon>
        <taxon>Mus</taxon>
        <taxon>Mus</taxon>
    </lineage>
</organism>
<accession>E9Q238</accession>
<feature type="chain" id="PRO_0000460964" description="KN motif and ankyrin repeat domains 1">
    <location>
        <begin position="1"/>
        <end position="1360"/>
    </location>
</feature>
<feature type="repeat" description="ANK 0; degenerate" evidence="1">
    <location>
        <begin position="1117"/>
        <end position="1154"/>
    </location>
</feature>
<feature type="repeat" description="ANK 1" evidence="2">
    <location>
        <begin position="1169"/>
        <end position="1199"/>
    </location>
</feature>
<feature type="repeat" description="ANK 2" evidence="2">
    <location>
        <begin position="1203"/>
        <end position="1236"/>
    </location>
</feature>
<feature type="repeat" description="ANK 3" evidence="2">
    <location>
        <begin position="1241"/>
        <end position="1270"/>
    </location>
</feature>
<feature type="repeat" description="ANK 4" evidence="2">
    <location>
        <begin position="1274"/>
        <end position="1306"/>
    </location>
</feature>
<feature type="repeat" description="ANK 5" evidence="2">
    <location>
        <begin position="1308"/>
        <end position="1337"/>
    </location>
</feature>
<feature type="region of interest" description="KN motif; Interaction with TLN1" evidence="1">
    <location>
        <begin position="30"/>
        <end position="68"/>
    </location>
</feature>
<feature type="region of interest" description="Disordered" evidence="3">
    <location>
        <begin position="66"/>
        <end position="103"/>
    </location>
</feature>
<feature type="region of interest" description="Disordered" evidence="3">
    <location>
        <begin position="221"/>
        <end position="253"/>
    </location>
</feature>
<feature type="region of interest" description="Interaction with PPFIBP1" evidence="1">
    <location>
        <begin position="244"/>
        <end position="339"/>
    </location>
</feature>
<feature type="region of interest" description="Disordered" evidence="3">
    <location>
        <begin position="929"/>
        <end position="954"/>
    </location>
</feature>
<feature type="region of interest" description="Disordered" evidence="3">
    <location>
        <begin position="983"/>
        <end position="1053"/>
    </location>
</feature>
<feature type="region of interest" description="Interaction with KIF21A" evidence="1">
    <location>
        <begin position="1081"/>
        <end position="1360"/>
    </location>
</feature>
<feature type="region of interest" description="Disordered" evidence="3">
    <location>
        <begin position="1337"/>
        <end position="1360"/>
    </location>
</feature>
<feature type="coiled-coil region" evidence="2">
    <location>
        <begin position="260"/>
        <end position="311"/>
    </location>
</feature>
<feature type="coiled-coil region" evidence="2">
    <location>
        <begin position="367"/>
        <end position="394"/>
    </location>
</feature>
<feature type="coiled-coil region" evidence="2">
    <location>
        <begin position="453"/>
        <end position="487"/>
    </location>
</feature>
<feature type="short sequence motif" description="Important for binding to TLN1" evidence="1">
    <location>
        <begin position="41"/>
        <end position="44"/>
    </location>
</feature>
<feature type="short sequence motif" description="Nuclear export signal 1 (NES 1)" evidence="1">
    <location>
        <begin position="43"/>
        <end position="52"/>
    </location>
</feature>
<feature type="short sequence motif" description="Nuclear localization signal 1 (NLS 1)" evidence="1">
    <location>
        <begin position="65"/>
        <end position="68"/>
    </location>
</feature>
<feature type="short sequence motif" description="Nuclear export signal 2 (NES 2)" evidence="1">
    <location>
        <begin position="125"/>
        <end position="134"/>
    </location>
</feature>
<feature type="short sequence motif" description="Nuclear export signal 3 (NES 3)" evidence="1">
    <location>
        <begin position="618"/>
        <end position="627"/>
    </location>
</feature>
<feature type="short sequence motif" description="Nuclear localization signal 2 (NLS 2)" evidence="1">
    <location>
        <begin position="985"/>
        <end position="998"/>
    </location>
</feature>
<feature type="compositionally biased region" description="Low complexity" evidence="3">
    <location>
        <begin position="88"/>
        <end position="103"/>
    </location>
</feature>
<feature type="compositionally biased region" description="Polar residues" evidence="3">
    <location>
        <begin position="230"/>
        <end position="253"/>
    </location>
</feature>
<feature type="compositionally biased region" description="Basic and acidic residues" evidence="3">
    <location>
        <begin position="938"/>
        <end position="947"/>
    </location>
</feature>
<feature type="compositionally biased region" description="Basic and acidic residues" evidence="3">
    <location>
        <begin position="985"/>
        <end position="995"/>
    </location>
</feature>
<feature type="compositionally biased region" description="Low complexity" evidence="3">
    <location>
        <begin position="1010"/>
        <end position="1025"/>
    </location>
</feature>
<feature type="compositionally biased region" description="Acidic residues" evidence="3">
    <location>
        <begin position="1026"/>
        <end position="1047"/>
    </location>
</feature>
<feature type="modified residue" description="Phosphoserine" evidence="1">
    <location>
        <position position="186"/>
    </location>
</feature>
<feature type="modified residue" description="Phosphoserine" evidence="1">
    <location>
        <position position="325"/>
    </location>
</feature>
<feature type="mutagenesis site" description="Impairs KIF21A binding." evidence="5">
    <original>Y</original>
    <variation>C</variation>
    <location>
        <position position="1176"/>
    </location>
</feature>
<feature type="mutagenesis site" description="Does not affect KIF21A binding." evidence="5">
    <original>S</original>
    <variation>F</variation>
    <location>
        <position position="1179"/>
    </location>
</feature>
<feature type="mutagenesis site" description="Impairs KIF21A binding." evidence="5">
    <original>N</original>
    <variation>D</variation>
    <location>
        <position position="1201"/>
    </location>
</feature>
<feature type="mutagenesis site" description="Impairs KIF21A binding." evidence="5">
    <original>L</original>
    <variation>Q</variation>
    <location>
        <position position="1248"/>
    </location>
</feature>
<feature type="mutagenesis site" description="Impairs KIF21A binding." evidence="5">
    <original>S</original>
    <variation>F</variation>
    <location>
        <position position="1276"/>
    </location>
</feature>
<feature type="mutagenesis site" description="Impairs KIF21A binding." evidence="5">
    <original>E</original>
    <variation>K</variation>
    <location>
        <position position="1284"/>
    </location>
</feature>
<feature type="mutagenesis site" description="Impairs KIF21A binding." evidence="5">
    <original>D</original>
    <variation>K</variation>
    <location>
        <position position="1306"/>
    </location>
</feature>
<feature type="helix" evidence="8">
    <location>
        <begin position="1095"/>
        <end position="1107"/>
    </location>
</feature>
<feature type="helix" evidence="8">
    <location>
        <begin position="1111"/>
        <end position="1114"/>
    </location>
</feature>
<feature type="helix" evidence="8">
    <location>
        <begin position="1117"/>
        <end position="1134"/>
    </location>
</feature>
<feature type="helix" evidence="8">
    <location>
        <begin position="1141"/>
        <end position="1154"/>
    </location>
</feature>
<feature type="helix" evidence="8">
    <location>
        <begin position="1156"/>
        <end position="1163"/>
    </location>
</feature>
<feature type="helix" evidence="8">
    <location>
        <begin position="1173"/>
        <end position="1179"/>
    </location>
</feature>
<feature type="helix" evidence="8">
    <location>
        <begin position="1183"/>
        <end position="1191"/>
    </location>
</feature>
<feature type="helix" evidence="8">
    <location>
        <begin position="1207"/>
        <end position="1213"/>
    </location>
</feature>
<feature type="helix" evidence="8">
    <location>
        <begin position="1219"/>
        <end position="1231"/>
    </location>
</feature>
<feature type="turn" evidence="8">
    <location>
        <begin position="1239"/>
        <end position="1242"/>
    </location>
</feature>
<feature type="helix" evidence="8">
    <location>
        <begin position="1245"/>
        <end position="1251"/>
    </location>
</feature>
<feature type="helix" evidence="8">
    <location>
        <begin position="1255"/>
        <end position="1263"/>
    </location>
</feature>
<feature type="helix" evidence="8">
    <location>
        <begin position="1278"/>
        <end position="1285"/>
    </location>
</feature>
<feature type="helix" evidence="8">
    <location>
        <begin position="1288"/>
        <end position="1295"/>
    </location>
</feature>
<feature type="helix" evidence="8">
    <location>
        <begin position="1312"/>
        <end position="1318"/>
    </location>
</feature>
<feature type="helix" evidence="8">
    <location>
        <begin position="1322"/>
        <end position="1332"/>
    </location>
</feature>
<proteinExistence type="evidence at protein level"/>
<evidence type="ECO:0000250" key="1">
    <source>
        <dbReference type="UniProtKB" id="Q14678"/>
    </source>
</evidence>
<evidence type="ECO:0000255" key="2"/>
<evidence type="ECO:0000256" key="3">
    <source>
        <dbReference type="SAM" id="MobiDB-lite"/>
    </source>
</evidence>
<evidence type="ECO:0000269" key="4">
    <source>
    </source>
</evidence>
<evidence type="ECO:0000269" key="5">
    <source>
    </source>
</evidence>
<evidence type="ECO:0000303" key="6">
    <source>
    </source>
</evidence>
<evidence type="ECO:0000312" key="7">
    <source>
        <dbReference type="MGI" id="MGI:2147707"/>
    </source>
</evidence>
<evidence type="ECO:0007829" key="8">
    <source>
        <dbReference type="PDB" id="5YAY"/>
    </source>
</evidence>